<feature type="chain" id="PRO_0000198514" description="Ribonuclease P protein component">
    <location>
        <begin position="1"/>
        <end position="110"/>
    </location>
</feature>
<gene>
    <name evidence="1" type="primary">rnpA</name>
    <name type="ordered locus">mlr4810</name>
</gene>
<protein>
    <recommendedName>
        <fullName evidence="1">Ribonuclease P protein component</fullName>
        <shortName evidence="1">RNase P protein</shortName>
        <shortName evidence="1">RNaseP protein</shortName>
        <ecNumber evidence="1">3.1.26.5</ecNumber>
    </recommendedName>
    <alternativeName>
        <fullName evidence="1">Protein C5</fullName>
    </alternativeName>
</protein>
<reference key="1">
    <citation type="journal article" date="2000" name="DNA Res.">
        <title>Complete genome structure of the nitrogen-fixing symbiotic bacterium Mesorhizobium loti.</title>
        <authorList>
            <person name="Kaneko T."/>
            <person name="Nakamura Y."/>
            <person name="Sato S."/>
            <person name="Asamizu E."/>
            <person name="Kato T."/>
            <person name="Sasamoto S."/>
            <person name="Watanabe A."/>
            <person name="Idesawa K."/>
            <person name="Ishikawa A."/>
            <person name="Kawashima K."/>
            <person name="Kimura T."/>
            <person name="Kishida Y."/>
            <person name="Kiyokawa C."/>
            <person name="Kohara M."/>
            <person name="Matsumoto M."/>
            <person name="Matsuno A."/>
            <person name="Mochizuki Y."/>
            <person name="Nakayama S."/>
            <person name="Nakazaki N."/>
            <person name="Shimpo S."/>
            <person name="Sugimoto M."/>
            <person name="Takeuchi C."/>
            <person name="Yamada M."/>
            <person name="Tabata S."/>
        </authorList>
    </citation>
    <scope>NUCLEOTIDE SEQUENCE [LARGE SCALE GENOMIC DNA]</scope>
    <source>
        <strain>LMG 29417 / CECT 9101 / MAFF 303099</strain>
    </source>
</reference>
<name>RNPA_RHILO</name>
<organism>
    <name type="scientific">Mesorhizobium japonicum (strain LMG 29417 / CECT 9101 / MAFF 303099)</name>
    <name type="common">Mesorhizobium loti (strain MAFF 303099)</name>
    <dbReference type="NCBI Taxonomy" id="266835"/>
    <lineage>
        <taxon>Bacteria</taxon>
        <taxon>Pseudomonadati</taxon>
        <taxon>Pseudomonadota</taxon>
        <taxon>Alphaproteobacteria</taxon>
        <taxon>Hyphomicrobiales</taxon>
        <taxon>Phyllobacteriaceae</taxon>
        <taxon>Mesorhizobium</taxon>
    </lineage>
</organism>
<proteinExistence type="inferred from homology"/>
<comment type="function">
    <text evidence="1">RNaseP catalyzes the removal of the 5'-leader sequence from pre-tRNA to produce the mature 5'-terminus. It can also cleave other RNA substrates such as 4.5S RNA. The protein component plays an auxiliary but essential role in vivo by binding to the 5'-leader sequence and broadening the substrate specificity of the ribozyme.</text>
</comment>
<comment type="catalytic activity">
    <reaction evidence="1">
        <text>Endonucleolytic cleavage of RNA, removing 5'-extranucleotides from tRNA precursor.</text>
        <dbReference type="EC" id="3.1.26.5"/>
    </reaction>
</comment>
<comment type="subunit">
    <text evidence="1">Consists of a catalytic RNA component (M1 or rnpB) and a protein subunit.</text>
</comment>
<comment type="similarity">
    <text evidence="1">Belongs to the RnpA family.</text>
</comment>
<evidence type="ECO:0000255" key="1">
    <source>
        <dbReference type="HAMAP-Rule" id="MF_00227"/>
    </source>
</evidence>
<accession>Q98D89</accession>
<sequence length="110" mass="12543">MGQNPKRLLKRAEFLAVRRGEKRRGRFFLVEVLDRGDGGVPRVGYTVTKKVGNAVVRNRVRRRLKEAVRVHAADDMVPGNDYVIVGRDDALRAPFGQLKAELSRRFRGTR</sequence>
<keyword id="KW-0255">Endonuclease</keyword>
<keyword id="KW-0378">Hydrolase</keyword>
<keyword id="KW-0540">Nuclease</keyword>
<keyword id="KW-0694">RNA-binding</keyword>
<keyword id="KW-0819">tRNA processing</keyword>
<dbReference type="EC" id="3.1.26.5" evidence="1"/>
<dbReference type="EMBL" id="BA000012">
    <property type="protein sequence ID" value="BAB51382.1"/>
    <property type="molecule type" value="Genomic_DNA"/>
</dbReference>
<dbReference type="SMR" id="Q98D89"/>
<dbReference type="KEGG" id="mlo:mlr4810"/>
<dbReference type="eggNOG" id="COG0594">
    <property type="taxonomic scope" value="Bacteria"/>
</dbReference>
<dbReference type="HOGENOM" id="CLU_117179_6_1_5"/>
<dbReference type="Proteomes" id="UP000000552">
    <property type="component" value="Chromosome"/>
</dbReference>
<dbReference type="GO" id="GO:0030677">
    <property type="term" value="C:ribonuclease P complex"/>
    <property type="evidence" value="ECO:0007669"/>
    <property type="project" value="TreeGrafter"/>
</dbReference>
<dbReference type="GO" id="GO:0042781">
    <property type="term" value="F:3'-tRNA processing endoribonuclease activity"/>
    <property type="evidence" value="ECO:0007669"/>
    <property type="project" value="TreeGrafter"/>
</dbReference>
<dbReference type="GO" id="GO:0004526">
    <property type="term" value="F:ribonuclease P activity"/>
    <property type="evidence" value="ECO:0007669"/>
    <property type="project" value="UniProtKB-UniRule"/>
</dbReference>
<dbReference type="GO" id="GO:0000049">
    <property type="term" value="F:tRNA binding"/>
    <property type="evidence" value="ECO:0007669"/>
    <property type="project" value="UniProtKB-UniRule"/>
</dbReference>
<dbReference type="GO" id="GO:0001682">
    <property type="term" value="P:tRNA 5'-leader removal"/>
    <property type="evidence" value="ECO:0007669"/>
    <property type="project" value="UniProtKB-UniRule"/>
</dbReference>
<dbReference type="Gene3D" id="3.30.230.10">
    <property type="match status" value="1"/>
</dbReference>
<dbReference type="HAMAP" id="MF_00227">
    <property type="entry name" value="RNase_P"/>
    <property type="match status" value="1"/>
</dbReference>
<dbReference type="InterPro" id="IPR020568">
    <property type="entry name" value="Ribosomal_Su5_D2-typ_SF"/>
</dbReference>
<dbReference type="InterPro" id="IPR014721">
    <property type="entry name" value="Ribsml_uS5_D2-typ_fold_subgr"/>
</dbReference>
<dbReference type="InterPro" id="IPR000100">
    <property type="entry name" value="RNase_P"/>
</dbReference>
<dbReference type="InterPro" id="IPR020539">
    <property type="entry name" value="RNase_P_CS"/>
</dbReference>
<dbReference type="NCBIfam" id="TIGR00188">
    <property type="entry name" value="rnpA"/>
    <property type="match status" value="1"/>
</dbReference>
<dbReference type="PANTHER" id="PTHR33992">
    <property type="entry name" value="RIBONUCLEASE P PROTEIN COMPONENT"/>
    <property type="match status" value="1"/>
</dbReference>
<dbReference type="PANTHER" id="PTHR33992:SF1">
    <property type="entry name" value="RIBONUCLEASE P PROTEIN COMPONENT"/>
    <property type="match status" value="1"/>
</dbReference>
<dbReference type="Pfam" id="PF00825">
    <property type="entry name" value="Ribonuclease_P"/>
    <property type="match status" value="1"/>
</dbReference>
<dbReference type="SUPFAM" id="SSF54211">
    <property type="entry name" value="Ribosomal protein S5 domain 2-like"/>
    <property type="match status" value="1"/>
</dbReference>
<dbReference type="PROSITE" id="PS00648">
    <property type="entry name" value="RIBONUCLEASE_P"/>
    <property type="match status" value="1"/>
</dbReference>